<organism>
    <name type="scientific">Aspergillus clavatus (strain ATCC 1007 / CBS 513.65 / DSM 816 / NCTC 3887 / NRRL 1 / QM 1276 / 107)</name>
    <dbReference type="NCBI Taxonomy" id="344612"/>
    <lineage>
        <taxon>Eukaryota</taxon>
        <taxon>Fungi</taxon>
        <taxon>Dikarya</taxon>
        <taxon>Ascomycota</taxon>
        <taxon>Pezizomycotina</taxon>
        <taxon>Eurotiomycetes</taxon>
        <taxon>Eurotiomycetidae</taxon>
        <taxon>Eurotiales</taxon>
        <taxon>Aspergillaceae</taxon>
        <taxon>Aspergillus</taxon>
        <taxon>Aspergillus subgen. Fumigati</taxon>
    </lineage>
</organism>
<feature type="chain" id="PRO_0000369378" description="Molybdenum cofactor sulfurase">
    <location>
        <begin position="1"/>
        <end position="845"/>
    </location>
</feature>
<feature type="domain" description="MOSC" evidence="2">
    <location>
        <begin position="666"/>
        <end position="840"/>
    </location>
</feature>
<feature type="active site" evidence="2">
    <location>
        <position position="404"/>
    </location>
</feature>
<feature type="modified residue" description="N6-(pyridoxal phosphate)lysine" evidence="2">
    <location>
        <position position="240"/>
    </location>
</feature>
<reference key="1">
    <citation type="journal article" date="2008" name="PLoS Genet.">
        <title>Genomic islands in the pathogenic filamentous fungus Aspergillus fumigatus.</title>
        <authorList>
            <person name="Fedorova N.D."/>
            <person name="Khaldi N."/>
            <person name="Joardar V.S."/>
            <person name="Maiti R."/>
            <person name="Amedeo P."/>
            <person name="Anderson M.J."/>
            <person name="Crabtree J."/>
            <person name="Silva J.C."/>
            <person name="Badger J.H."/>
            <person name="Albarraq A."/>
            <person name="Angiuoli S."/>
            <person name="Bussey H."/>
            <person name="Bowyer P."/>
            <person name="Cotty P.J."/>
            <person name="Dyer P.S."/>
            <person name="Egan A."/>
            <person name="Galens K."/>
            <person name="Fraser-Liggett C.M."/>
            <person name="Haas B.J."/>
            <person name="Inman J.M."/>
            <person name="Kent R."/>
            <person name="Lemieux S."/>
            <person name="Malavazi I."/>
            <person name="Orvis J."/>
            <person name="Roemer T."/>
            <person name="Ronning C.M."/>
            <person name="Sundaram J.P."/>
            <person name="Sutton G."/>
            <person name="Turner G."/>
            <person name="Venter J.C."/>
            <person name="White O.R."/>
            <person name="Whitty B.R."/>
            <person name="Youngman P."/>
            <person name="Wolfe K.H."/>
            <person name="Goldman G.H."/>
            <person name="Wortman J.R."/>
            <person name="Jiang B."/>
            <person name="Denning D.W."/>
            <person name="Nierman W.C."/>
        </authorList>
    </citation>
    <scope>NUCLEOTIDE SEQUENCE [LARGE SCALE GENOMIC DNA]</scope>
    <source>
        <strain>ATCC 1007 / CBS 513.65 / DSM 816 / NCTC 3887 / NRRL 1 / QM 1276 / 107</strain>
    </source>
</reference>
<comment type="function">
    <text evidence="2">Sulfurates the molybdenum cofactor. Sulfation of molybdenum is essential for xanthine dehydrogenase (XDH) and aldehyde oxidase (ADO) enzymes in which molybdenum cofactor is liganded by 1 oxygen and 1 sulfur atom in active form.</text>
</comment>
<comment type="catalytic activity">
    <reaction evidence="2">
        <text>Mo-molybdopterin + L-cysteine + AH2 = thio-Mo-molybdopterin + L-alanine + A + H2O</text>
        <dbReference type="Rhea" id="RHEA:42636"/>
        <dbReference type="ChEBI" id="CHEBI:13193"/>
        <dbReference type="ChEBI" id="CHEBI:15377"/>
        <dbReference type="ChEBI" id="CHEBI:17499"/>
        <dbReference type="ChEBI" id="CHEBI:35235"/>
        <dbReference type="ChEBI" id="CHEBI:57972"/>
        <dbReference type="ChEBI" id="CHEBI:71302"/>
        <dbReference type="ChEBI" id="CHEBI:82685"/>
        <dbReference type="EC" id="2.8.1.9"/>
    </reaction>
</comment>
<comment type="cofactor">
    <cofactor evidence="2">
        <name>pyridoxal 5'-phosphate</name>
        <dbReference type="ChEBI" id="CHEBI:597326"/>
    </cofactor>
</comment>
<comment type="pathway">
    <text evidence="1">Cofactor biosynthesis; molybdopterin biosynthesis.</text>
</comment>
<comment type="similarity">
    <text evidence="2">Belongs to the class-V pyridoxal-phosphate-dependent aminotransferase family. MOCOS subfamily.</text>
</comment>
<proteinExistence type="inferred from homology"/>
<protein>
    <recommendedName>
        <fullName evidence="2">Molybdenum cofactor sulfurase</fullName>
        <shortName evidence="2">MCS</shortName>
        <shortName evidence="2">MOS</shortName>
        <shortName evidence="2">MoCo sulfurase</shortName>
        <ecNumber evidence="2">2.8.1.9</ecNumber>
    </recommendedName>
    <alternativeName>
        <fullName evidence="2">Molybdenum cofactor sulfurtransferase</fullName>
    </alternativeName>
</protein>
<sequence length="845" mass="94023">MVGVKTQGEDILEYGRGYSEDVDIIREREYPQLKDTTYLDHAGTTLYAKSLIEAFSRDLTSNLFGNPHSMSASSQLSTRRVDDVRLRALRFFKADPDDFDLVFVANATAAIKLVADAMRDSRQGFWYGYHVDAHTSLVGARELAAKGNRCFSSDEEVEGWIQSLREAGPESLNLFAYPAQSNLNGRRLPLSWCETIRRRSEAAGGNTYTLLDAASLVSTSPLDLSDAAAAPDFTVLSFYKIFGFPDLGALIVRKSAGHIFEQRRFFGGGTVDMVLTREMQWHAKKQSSIHDRLEDGTLPFHSIIALDSAFATHRRLFGSMENVSSHTRFLAKRLYDKLAALKHSNGERVCQLYTNPFSDYNKAASQGPIIAFNLRNSHGAWIGKSEVERLATVKNIQFRSGSLCNPGGTSGSLGWTGADLLQQFSAGLRCGDDHDVMDGRPTGVLRLSLGAMTNLADINTVIQFVEEFYVERAAAVESLITPVPSIPVQQPRFYIESLSVYPIKSCGAFRVPDGKRWEIRREGLAWDREWCLVHQGTGATLNQKKYPRMALIRPFVDLDRNVLRITCGELTSSDQQVLEVSLDREDTNLVSTSICQRSSKSSTVCGDQVVVQAYSSPSVSRFFSEFLGVPCTLARFPPQSSSRFSPPKRPSGAWKQYLRKFVMPGSFPQDSSPSSAPERNPILLSNESPILLISRSSVNYLNENIKANQKKKKRAEGSSSSRAVAADVFRANIVVAESFTQLPRVESPYVEDHWESLKIGPEHLQLDVLGACQRCSMVCIDQFTGVRRDEPFSTLAKTRKINGKIVFGRHASLASSEVTRDEHDTTERWTLMVGDTVTPSYTHEE</sequence>
<evidence type="ECO:0000250" key="1">
    <source>
        <dbReference type="UniProtKB" id="Q96EN8"/>
    </source>
</evidence>
<evidence type="ECO:0000255" key="2">
    <source>
        <dbReference type="HAMAP-Rule" id="MF_03050"/>
    </source>
</evidence>
<keyword id="KW-0501">Molybdenum cofactor biosynthesis</keyword>
<keyword id="KW-0663">Pyridoxal phosphate</keyword>
<keyword id="KW-1185">Reference proteome</keyword>
<keyword id="KW-0808">Transferase</keyword>
<gene>
    <name evidence="2" type="primary">hxB</name>
    <name type="ORF">ACLA_048350</name>
</gene>
<accession>A1CHL0</accession>
<dbReference type="EC" id="2.8.1.9" evidence="2"/>
<dbReference type="EMBL" id="DS027054">
    <property type="protein sequence ID" value="EAW10365.1"/>
    <property type="molecule type" value="Genomic_DNA"/>
</dbReference>
<dbReference type="RefSeq" id="XP_001271791.1">
    <property type="nucleotide sequence ID" value="XM_001271790.1"/>
</dbReference>
<dbReference type="SMR" id="A1CHL0"/>
<dbReference type="STRING" id="344612.A1CHL0"/>
<dbReference type="EnsemblFungi" id="EAW10365">
    <property type="protein sequence ID" value="EAW10365"/>
    <property type="gene ID" value="ACLA_048350"/>
</dbReference>
<dbReference type="GeneID" id="4704171"/>
<dbReference type="KEGG" id="act:ACLA_048350"/>
<dbReference type="VEuPathDB" id="FungiDB:ACLA_048350"/>
<dbReference type="eggNOG" id="KOG2142">
    <property type="taxonomic scope" value="Eukaryota"/>
</dbReference>
<dbReference type="HOGENOM" id="CLU_010913_0_0_1"/>
<dbReference type="OMA" id="PCTRCQM"/>
<dbReference type="OrthoDB" id="10264306at2759"/>
<dbReference type="UniPathway" id="UPA00344"/>
<dbReference type="Proteomes" id="UP000006701">
    <property type="component" value="Unassembled WGS sequence"/>
</dbReference>
<dbReference type="GO" id="GO:0016829">
    <property type="term" value="F:lyase activity"/>
    <property type="evidence" value="ECO:0007669"/>
    <property type="project" value="UniProtKB-UniRule"/>
</dbReference>
<dbReference type="GO" id="GO:0008265">
    <property type="term" value="F:molybdenum cofactor sulfurtransferase activity"/>
    <property type="evidence" value="ECO:0007669"/>
    <property type="project" value="UniProtKB-UniRule"/>
</dbReference>
<dbReference type="GO" id="GO:0030151">
    <property type="term" value="F:molybdenum ion binding"/>
    <property type="evidence" value="ECO:0007669"/>
    <property type="project" value="UniProtKB-UniRule"/>
</dbReference>
<dbReference type="GO" id="GO:0030170">
    <property type="term" value="F:pyridoxal phosphate binding"/>
    <property type="evidence" value="ECO:0007669"/>
    <property type="project" value="UniProtKB-UniRule"/>
</dbReference>
<dbReference type="GO" id="GO:0006777">
    <property type="term" value="P:Mo-molybdopterin cofactor biosynthetic process"/>
    <property type="evidence" value="ECO:0007669"/>
    <property type="project" value="UniProtKB-UniRule"/>
</dbReference>
<dbReference type="Gene3D" id="3.90.1150.10">
    <property type="entry name" value="Aspartate Aminotransferase, domain 1"/>
    <property type="match status" value="1"/>
</dbReference>
<dbReference type="Gene3D" id="3.40.640.10">
    <property type="entry name" value="Type I PLP-dependent aspartate aminotransferase-like (Major domain)"/>
    <property type="match status" value="1"/>
</dbReference>
<dbReference type="HAMAP" id="MF_03050">
    <property type="entry name" value="MOCOS"/>
    <property type="match status" value="1"/>
</dbReference>
<dbReference type="InterPro" id="IPR000192">
    <property type="entry name" value="Aminotrans_V_dom"/>
</dbReference>
<dbReference type="InterPro" id="IPR005302">
    <property type="entry name" value="MoCF_Sase_C"/>
</dbReference>
<dbReference type="InterPro" id="IPR028886">
    <property type="entry name" value="MoCo_sulfurase"/>
</dbReference>
<dbReference type="InterPro" id="IPR005303">
    <property type="entry name" value="MOCOS_middle"/>
</dbReference>
<dbReference type="InterPro" id="IPR015424">
    <property type="entry name" value="PyrdxlP-dep_Trfase"/>
</dbReference>
<dbReference type="InterPro" id="IPR015421">
    <property type="entry name" value="PyrdxlP-dep_Trfase_major"/>
</dbReference>
<dbReference type="InterPro" id="IPR015422">
    <property type="entry name" value="PyrdxlP-dep_Trfase_small"/>
</dbReference>
<dbReference type="PANTHER" id="PTHR14237:SF19">
    <property type="entry name" value="MITOCHONDRIAL AMIDOXIME REDUCING COMPONENT 1"/>
    <property type="match status" value="1"/>
</dbReference>
<dbReference type="PANTHER" id="PTHR14237">
    <property type="entry name" value="MOLYBDOPTERIN COFACTOR SULFURASE MOSC"/>
    <property type="match status" value="1"/>
</dbReference>
<dbReference type="Pfam" id="PF00266">
    <property type="entry name" value="Aminotran_5"/>
    <property type="match status" value="1"/>
</dbReference>
<dbReference type="Pfam" id="PF03473">
    <property type="entry name" value="MOSC"/>
    <property type="match status" value="1"/>
</dbReference>
<dbReference type="Pfam" id="PF03476">
    <property type="entry name" value="MOSC_N"/>
    <property type="match status" value="1"/>
</dbReference>
<dbReference type="SUPFAM" id="SSF141673">
    <property type="entry name" value="MOSC N-terminal domain-like"/>
    <property type="match status" value="1"/>
</dbReference>
<dbReference type="SUPFAM" id="SSF53383">
    <property type="entry name" value="PLP-dependent transferases"/>
    <property type="match status" value="1"/>
</dbReference>
<dbReference type="PROSITE" id="PS51340">
    <property type="entry name" value="MOSC"/>
    <property type="match status" value="1"/>
</dbReference>
<name>MOCOS_ASPCL</name>